<sequence>MNNEHRFEIDGITYLMTPANAMAAWQSLKRAGVLLRGMDADALTNTQGAASVALGAILSHLGDPAVTEIEALVFEQTAIKTPDGTTYRLSPDRLNEHFNTRRTHLLRVLMEGVKYQYSDFFAGGMAAFQELIPMPSAEKQ</sequence>
<keyword id="KW-1185">Reference proteome</keyword>
<accession>Q87CA2</accession>
<feature type="chain" id="PRO_0000220280" description="Uncharacterized protein PD_1186">
    <location>
        <begin position="1"/>
        <end position="140"/>
    </location>
</feature>
<protein>
    <recommendedName>
        <fullName>Uncharacterized protein PD_1186</fullName>
    </recommendedName>
</protein>
<organism>
    <name type="scientific">Xylella fastidiosa (strain Temecula1 / ATCC 700964)</name>
    <dbReference type="NCBI Taxonomy" id="183190"/>
    <lineage>
        <taxon>Bacteria</taxon>
        <taxon>Pseudomonadati</taxon>
        <taxon>Pseudomonadota</taxon>
        <taxon>Gammaproteobacteria</taxon>
        <taxon>Lysobacterales</taxon>
        <taxon>Lysobacteraceae</taxon>
        <taxon>Xylella</taxon>
    </lineage>
</organism>
<dbReference type="EMBL" id="AE009442">
    <property type="protein sequence ID" value="AAO29039.1"/>
    <property type="molecule type" value="Genomic_DNA"/>
</dbReference>
<dbReference type="RefSeq" id="WP_004085005.1">
    <property type="nucleotide sequence ID" value="NC_004556.1"/>
</dbReference>
<dbReference type="KEGG" id="xft:PD_1186"/>
<dbReference type="HOGENOM" id="CLU_1834403_0_0_6"/>
<dbReference type="Proteomes" id="UP000002516">
    <property type="component" value="Chromosome"/>
</dbReference>
<dbReference type="InterPro" id="IPR020351">
    <property type="entry name" value="Phage_TAC_9"/>
</dbReference>
<dbReference type="Pfam" id="PF10876">
    <property type="entry name" value="Phage_TAC_9"/>
    <property type="match status" value="1"/>
</dbReference>
<gene>
    <name type="ordered locus">PD_1186</name>
</gene>
<reference key="1">
    <citation type="journal article" date="2003" name="J. Bacteriol.">
        <title>Comparative analyses of the complete genome sequences of Pierce's disease and citrus variegated chlorosis strains of Xylella fastidiosa.</title>
        <authorList>
            <person name="Van Sluys M.A."/>
            <person name="de Oliveira M.C."/>
            <person name="Monteiro-Vitorello C.B."/>
            <person name="Miyaki C.Y."/>
            <person name="Furlan L.R."/>
            <person name="Camargo L.E.A."/>
            <person name="da Silva A.C.R."/>
            <person name="Moon D.H."/>
            <person name="Takita M.A."/>
            <person name="Lemos E.G.M."/>
            <person name="Machado M.A."/>
            <person name="Ferro M.I.T."/>
            <person name="da Silva F.R."/>
            <person name="Goldman M.H.S."/>
            <person name="Goldman G.H."/>
            <person name="Lemos M.V.F."/>
            <person name="El-Dorry H."/>
            <person name="Tsai S.M."/>
            <person name="Carrer H."/>
            <person name="Carraro D.M."/>
            <person name="de Oliveira R.C."/>
            <person name="Nunes L.R."/>
            <person name="Siqueira W.J."/>
            <person name="Coutinho L.L."/>
            <person name="Kimura E.T."/>
            <person name="Ferro E.S."/>
            <person name="Harakava R."/>
            <person name="Kuramae E.E."/>
            <person name="Marino C.L."/>
            <person name="Giglioti E."/>
            <person name="Abreu I.L."/>
            <person name="Alves L.M.C."/>
            <person name="do Amaral A.M."/>
            <person name="Baia G.S."/>
            <person name="Blanco S.R."/>
            <person name="Brito M.S."/>
            <person name="Cannavan F.S."/>
            <person name="Celestino A.V."/>
            <person name="da Cunha A.F."/>
            <person name="Fenille R.C."/>
            <person name="Ferro J.A."/>
            <person name="Formighieri E.F."/>
            <person name="Kishi L.T."/>
            <person name="Leoni S.G."/>
            <person name="Oliveira A.R."/>
            <person name="Rosa V.E. Jr."/>
            <person name="Sassaki F.T."/>
            <person name="Sena J.A.D."/>
            <person name="de Souza A.A."/>
            <person name="Truffi D."/>
            <person name="Tsukumo F."/>
            <person name="Yanai G.M."/>
            <person name="Zaros L.G."/>
            <person name="Civerolo E.L."/>
            <person name="Simpson A.J.G."/>
            <person name="Almeida N.F. Jr."/>
            <person name="Setubal J.C."/>
            <person name="Kitajima J.P."/>
        </authorList>
    </citation>
    <scope>NUCLEOTIDE SEQUENCE [LARGE SCALE GENOMIC DNA]</scope>
    <source>
        <strain>Temecula1 / ATCC 700964</strain>
    </source>
</reference>
<proteinExistence type="predicted"/>
<name>Y1186_XYLFT</name>